<dbReference type="EC" id="5.3.1.24" evidence="1"/>
<dbReference type="EMBL" id="AE008922">
    <property type="protein sequence ID" value="AAM41817.1"/>
    <property type="molecule type" value="Genomic_DNA"/>
</dbReference>
<dbReference type="RefSeq" id="NP_637893.1">
    <property type="nucleotide sequence ID" value="NC_003902.1"/>
</dbReference>
<dbReference type="RefSeq" id="WP_011037675.1">
    <property type="nucleotide sequence ID" value="NC_003902.1"/>
</dbReference>
<dbReference type="SMR" id="Q8P7R6"/>
<dbReference type="STRING" id="190485.XCC2545"/>
<dbReference type="EnsemblBacteria" id="AAM41817">
    <property type="protein sequence ID" value="AAM41817"/>
    <property type="gene ID" value="XCC2545"/>
</dbReference>
<dbReference type="KEGG" id="xcc:XCC2545"/>
<dbReference type="PATRIC" id="fig|190485.4.peg.2711"/>
<dbReference type="eggNOG" id="COG0135">
    <property type="taxonomic scope" value="Bacteria"/>
</dbReference>
<dbReference type="HOGENOM" id="CLU_076364_2_0_6"/>
<dbReference type="OrthoDB" id="9796196at2"/>
<dbReference type="UniPathway" id="UPA00035">
    <property type="reaction ID" value="UER00042"/>
</dbReference>
<dbReference type="Proteomes" id="UP000001010">
    <property type="component" value="Chromosome"/>
</dbReference>
<dbReference type="GO" id="GO:0004640">
    <property type="term" value="F:phosphoribosylanthranilate isomerase activity"/>
    <property type="evidence" value="ECO:0000318"/>
    <property type="project" value="GO_Central"/>
</dbReference>
<dbReference type="GO" id="GO:0000162">
    <property type="term" value="P:L-tryptophan biosynthetic process"/>
    <property type="evidence" value="ECO:0000318"/>
    <property type="project" value="GO_Central"/>
</dbReference>
<dbReference type="CDD" id="cd00405">
    <property type="entry name" value="PRAI"/>
    <property type="match status" value="1"/>
</dbReference>
<dbReference type="Gene3D" id="3.20.20.70">
    <property type="entry name" value="Aldolase class I"/>
    <property type="match status" value="1"/>
</dbReference>
<dbReference type="HAMAP" id="MF_00135">
    <property type="entry name" value="PRAI"/>
    <property type="match status" value="1"/>
</dbReference>
<dbReference type="InterPro" id="IPR013785">
    <property type="entry name" value="Aldolase_TIM"/>
</dbReference>
<dbReference type="InterPro" id="IPR001240">
    <property type="entry name" value="PRAI_dom"/>
</dbReference>
<dbReference type="InterPro" id="IPR011060">
    <property type="entry name" value="RibuloseP-bd_barrel"/>
</dbReference>
<dbReference type="InterPro" id="IPR044643">
    <property type="entry name" value="TrpF_fam"/>
</dbReference>
<dbReference type="NCBIfam" id="NF002296">
    <property type="entry name" value="PRK01222.1-2"/>
    <property type="match status" value="1"/>
</dbReference>
<dbReference type="NCBIfam" id="NF002298">
    <property type="entry name" value="PRK01222.1-4"/>
    <property type="match status" value="1"/>
</dbReference>
<dbReference type="PANTHER" id="PTHR42894">
    <property type="entry name" value="N-(5'-PHOSPHORIBOSYL)ANTHRANILATE ISOMERASE"/>
    <property type="match status" value="1"/>
</dbReference>
<dbReference type="PANTHER" id="PTHR42894:SF1">
    <property type="entry name" value="N-(5'-PHOSPHORIBOSYL)ANTHRANILATE ISOMERASE"/>
    <property type="match status" value="1"/>
</dbReference>
<dbReference type="Pfam" id="PF00697">
    <property type="entry name" value="PRAI"/>
    <property type="match status" value="1"/>
</dbReference>
<dbReference type="SUPFAM" id="SSF51366">
    <property type="entry name" value="Ribulose-phoshate binding barrel"/>
    <property type="match status" value="1"/>
</dbReference>
<accession>Q8P7R6</accession>
<sequence length="222" mass="24162">MNRSLYRTRIKFCGMTRAGDIRLAGELGVDAVGFIFAHGSPRRVAPAEARAMRQATAPMVDVVALFRNNSKEEVREVVRTVRPTLLQFHGEEDDAFCRSFNLPYLKAVPMGASGVNGEDANARTLQLAYPNTAGFLFDSHAPGEGGGTGKTFDWSRLPTGLHRPFLLAGGITADNVFDAIVATLPWGVDVSSGVELAPGIKDGHKMRKFVEEVRRADCHEMS</sequence>
<comment type="catalytic activity">
    <reaction evidence="1">
        <text>N-(5-phospho-beta-D-ribosyl)anthranilate = 1-(2-carboxyphenylamino)-1-deoxy-D-ribulose 5-phosphate</text>
        <dbReference type="Rhea" id="RHEA:21540"/>
        <dbReference type="ChEBI" id="CHEBI:18277"/>
        <dbReference type="ChEBI" id="CHEBI:58613"/>
        <dbReference type="EC" id="5.3.1.24"/>
    </reaction>
</comment>
<comment type="pathway">
    <text evidence="1">Amino-acid biosynthesis; L-tryptophan biosynthesis; L-tryptophan from chorismate: step 3/5.</text>
</comment>
<comment type="similarity">
    <text evidence="1">Belongs to the TrpF family.</text>
</comment>
<gene>
    <name evidence="1" type="primary">trpF</name>
    <name type="ordered locus">XCC2545</name>
</gene>
<keyword id="KW-0028">Amino-acid biosynthesis</keyword>
<keyword id="KW-0057">Aromatic amino acid biosynthesis</keyword>
<keyword id="KW-0413">Isomerase</keyword>
<keyword id="KW-1185">Reference proteome</keyword>
<keyword id="KW-0822">Tryptophan biosynthesis</keyword>
<evidence type="ECO:0000255" key="1">
    <source>
        <dbReference type="HAMAP-Rule" id="MF_00135"/>
    </source>
</evidence>
<feature type="chain" id="PRO_0000154393" description="N-(5'-phosphoribosyl)anthranilate isomerase">
    <location>
        <begin position="1"/>
        <end position="222"/>
    </location>
</feature>
<reference key="1">
    <citation type="journal article" date="2002" name="Nature">
        <title>Comparison of the genomes of two Xanthomonas pathogens with differing host specificities.</title>
        <authorList>
            <person name="da Silva A.C.R."/>
            <person name="Ferro J.A."/>
            <person name="Reinach F.C."/>
            <person name="Farah C.S."/>
            <person name="Furlan L.R."/>
            <person name="Quaggio R.B."/>
            <person name="Monteiro-Vitorello C.B."/>
            <person name="Van Sluys M.A."/>
            <person name="Almeida N.F. Jr."/>
            <person name="Alves L.M.C."/>
            <person name="do Amaral A.M."/>
            <person name="Bertolini M.C."/>
            <person name="Camargo L.E.A."/>
            <person name="Camarotte G."/>
            <person name="Cannavan F."/>
            <person name="Cardozo J."/>
            <person name="Chambergo F."/>
            <person name="Ciapina L.P."/>
            <person name="Cicarelli R.M.B."/>
            <person name="Coutinho L.L."/>
            <person name="Cursino-Santos J.R."/>
            <person name="El-Dorry H."/>
            <person name="Faria J.B."/>
            <person name="Ferreira A.J.S."/>
            <person name="Ferreira R.C.C."/>
            <person name="Ferro M.I.T."/>
            <person name="Formighieri E.F."/>
            <person name="Franco M.C."/>
            <person name="Greggio C.C."/>
            <person name="Gruber A."/>
            <person name="Katsuyama A.M."/>
            <person name="Kishi L.T."/>
            <person name="Leite R.P."/>
            <person name="Lemos E.G.M."/>
            <person name="Lemos M.V.F."/>
            <person name="Locali E.C."/>
            <person name="Machado M.A."/>
            <person name="Madeira A.M.B.N."/>
            <person name="Martinez-Rossi N.M."/>
            <person name="Martins E.C."/>
            <person name="Meidanis J."/>
            <person name="Menck C.F.M."/>
            <person name="Miyaki C.Y."/>
            <person name="Moon D.H."/>
            <person name="Moreira L.M."/>
            <person name="Novo M.T.M."/>
            <person name="Okura V.K."/>
            <person name="Oliveira M.C."/>
            <person name="Oliveira V.R."/>
            <person name="Pereira H.A."/>
            <person name="Rossi A."/>
            <person name="Sena J.A.D."/>
            <person name="Silva C."/>
            <person name="de Souza R.F."/>
            <person name="Spinola L.A.F."/>
            <person name="Takita M.A."/>
            <person name="Tamura R.E."/>
            <person name="Teixeira E.C."/>
            <person name="Tezza R.I.D."/>
            <person name="Trindade dos Santos M."/>
            <person name="Truffi D."/>
            <person name="Tsai S.M."/>
            <person name="White F.F."/>
            <person name="Setubal J.C."/>
            <person name="Kitajima J.P."/>
        </authorList>
    </citation>
    <scope>NUCLEOTIDE SEQUENCE [LARGE SCALE GENOMIC DNA]</scope>
    <source>
        <strain>ATCC 33913 / DSM 3586 / NCPPB 528 / LMG 568 / P 25</strain>
    </source>
</reference>
<name>TRPF_XANCP</name>
<proteinExistence type="inferred from homology"/>
<protein>
    <recommendedName>
        <fullName evidence="1">N-(5'-phosphoribosyl)anthranilate isomerase</fullName>
        <shortName evidence="1">PRAI</shortName>
        <ecNumber evidence="1">5.3.1.24</ecNumber>
    </recommendedName>
</protein>
<organism>
    <name type="scientific">Xanthomonas campestris pv. campestris (strain ATCC 33913 / DSM 3586 / NCPPB 528 / LMG 568 / P 25)</name>
    <dbReference type="NCBI Taxonomy" id="190485"/>
    <lineage>
        <taxon>Bacteria</taxon>
        <taxon>Pseudomonadati</taxon>
        <taxon>Pseudomonadota</taxon>
        <taxon>Gammaproteobacteria</taxon>
        <taxon>Lysobacterales</taxon>
        <taxon>Lysobacteraceae</taxon>
        <taxon>Xanthomonas</taxon>
    </lineage>
</organism>